<reference key="1">
    <citation type="journal article" date="1998" name="Plant Mol. Biol.">
        <title>Water-deficit-responsive proteins in maritime pine.</title>
        <authorList>
            <person name="Costa P."/>
            <person name="Bahrman N."/>
            <person name="Frigerio J.-M."/>
            <person name="Kremer A."/>
            <person name="Plomion C."/>
        </authorList>
    </citation>
    <scope>PROTEIN SEQUENCE</scope>
    <source>
        <tissue>Needle</tissue>
    </source>
</reference>
<reference key="2">
    <citation type="journal article" date="1999" name="Electrophoresis">
        <title>Separation and characterization of needle and xylem maritime pine proteins.</title>
        <authorList>
            <person name="Costa P."/>
            <person name="Pionneau C."/>
            <person name="Bauw G."/>
            <person name="Dubos C."/>
            <person name="Bahrman N."/>
            <person name="Kremer A."/>
            <person name="Frigerio J.-M."/>
            <person name="Plomion C."/>
        </authorList>
    </citation>
    <scope>PROTEIN SEQUENCE</scope>
    <source>
        <tissue>Needle</tissue>
    </source>
</reference>
<gene>
    <name type="primary">rbcL</name>
</gene>
<keyword id="KW-0113">Calvin cycle</keyword>
<keyword id="KW-0120">Carbon dioxide fixation</keyword>
<keyword id="KW-0150">Chloroplast</keyword>
<keyword id="KW-0903">Direct protein sequencing</keyword>
<keyword id="KW-0456">Lyase</keyword>
<keyword id="KW-0503">Monooxygenase</keyword>
<keyword id="KW-0560">Oxidoreductase</keyword>
<keyword id="KW-0601">Photorespiration</keyword>
<keyword id="KW-0602">Photosynthesis</keyword>
<keyword id="KW-0934">Plastid</keyword>
<keyword id="KW-0346">Stress response</keyword>
<sequence length="48" mass="5138">DTDILAAFRVTPQPGVPPEEAGAADVTLGFVDLLRWSPELAAACEIWK</sequence>
<accession>P81080</accession>
<comment type="function">
    <text evidence="1">RuBisCO catalyzes two reactions: the carboxylation of D-ribulose 1,5-bisphosphate, the primary event in carbon dioxide fixation, as well as the oxidative fragmentation of the pentose substrate in the photorespiration process. Both reactions occur simultaneously and in competition at the same active site (By similarity).</text>
</comment>
<comment type="catalytic activity">
    <reaction>
        <text>2 (2R)-3-phosphoglycerate + 2 H(+) = D-ribulose 1,5-bisphosphate + CO2 + H2O</text>
        <dbReference type="Rhea" id="RHEA:23124"/>
        <dbReference type="ChEBI" id="CHEBI:15377"/>
        <dbReference type="ChEBI" id="CHEBI:15378"/>
        <dbReference type="ChEBI" id="CHEBI:16526"/>
        <dbReference type="ChEBI" id="CHEBI:57870"/>
        <dbReference type="ChEBI" id="CHEBI:58272"/>
        <dbReference type="EC" id="4.1.1.39"/>
    </reaction>
</comment>
<comment type="catalytic activity">
    <reaction>
        <text>D-ribulose 1,5-bisphosphate + O2 = 2-phosphoglycolate + (2R)-3-phosphoglycerate + 2 H(+)</text>
        <dbReference type="Rhea" id="RHEA:36631"/>
        <dbReference type="ChEBI" id="CHEBI:15378"/>
        <dbReference type="ChEBI" id="CHEBI:15379"/>
        <dbReference type="ChEBI" id="CHEBI:57870"/>
        <dbReference type="ChEBI" id="CHEBI:58033"/>
        <dbReference type="ChEBI" id="CHEBI:58272"/>
    </reaction>
</comment>
<comment type="subunit">
    <text evidence="1">Heterohexadecamer of 8 large chains and 8 small chains.</text>
</comment>
<comment type="subcellular location">
    <subcellularLocation>
        <location>Plastid</location>
        <location>Chloroplast</location>
    </subcellularLocation>
</comment>
<comment type="induction">
    <text>By water stress.</text>
</comment>
<comment type="miscellaneous">
    <text evidence="1">The basic functional RuBisCO is composed of a large chain homodimer in a 'head-to-tail' conformation. In form I RuBisCO this homodimer is arranged in a barrel-like tetramer with the small subunits forming a tetrameric 'cap' on each end of the 'barrel' (By similarity).</text>
</comment>
<comment type="similarity">
    <text evidence="2">Belongs to the RuBisCO large chain family. Type I subfamily.</text>
</comment>
<feature type="chain" id="PRO_0000062563" description="Ribulose bisphosphate carboxylase large chain">
    <location>
        <begin position="1" status="less than"/>
        <end position="48" status="greater than"/>
    </location>
</feature>
<feature type="non-consecutive residues" evidence="2">
    <location>
        <begin position="24"/>
        <end position="25"/>
    </location>
</feature>
<feature type="non-consecutive residues" evidence="2">
    <location>
        <begin position="35"/>
        <end position="36"/>
    </location>
</feature>
<feature type="non-terminal residue">
    <location>
        <position position="1"/>
    </location>
</feature>
<feature type="non-terminal residue">
    <location>
        <position position="48"/>
    </location>
</feature>
<proteinExistence type="evidence at protein level"/>
<dbReference type="EC" id="4.1.1.39"/>
<dbReference type="SMR" id="P81080"/>
<dbReference type="GO" id="GO:0009507">
    <property type="term" value="C:chloroplast"/>
    <property type="evidence" value="ECO:0007669"/>
    <property type="project" value="UniProtKB-SubCell"/>
</dbReference>
<dbReference type="GO" id="GO:0004497">
    <property type="term" value="F:monooxygenase activity"/>
    <property type="evidence" value="ECO:0007669"/>
    <property type="project" value="UniProtKB-KW"/>
</dbReference>
<dbReference type="GO" id="GO:0016984">
    <property type="term" value="F:ribulose-bisphosphate carboxylase activity"/>
    <property type="evidence" value="ECO:0007669"/>
    <property type="project" value="UniProtKB-EC"/>
</dbReference>
<dbReference type="GO" id="GO:0009853">
    <property type="term" value="P:photorespiration"/>
    <property type="evidence" value="ECO:0007669"/>
    <property type="project" value="UniProtKB-KW"/>
</dbReference>
<dbReference type="GO" id="GO:0019253">
    <property type="term" value="P:reductive pentose-phosphate cycle"/>
    <property type="evidence" value="ECO:0007669"/>
    <property type="project" value="UniProtKB-KW"/>
</dbReference>
<dbReference type="InterPro" id="IPR036422">
    <property type="entry name" value="RuBisCO_lsu_N_sf"/>
</dbReference>
<dbReference type="SUPFAM" id="SSF54966">
    <property type="entry name" value="RuBisCO, large subunit, small (N-terminal) domain"/>
    <property type="match status" value="1"/>
</dbReference>
<organism>
    <name type="scientific">Pinus pinaster</name>
    <name type="common">Maritime pine</name>
    <dbReference type="NCBI Taxonomy" id="71647"/>
    <lineage>
        <taxon>Eukaryota</taxon>
        <taxon>Viridiplantae</taxon>
        <taxon>Streptophyta</taxon>
        <taxon>Embryophyta</taxon>
        <taxon>Tracheophyta</taxon>
        <taxon>Spermatophyta</taxon>
        <taxon>Pinopsida</taxon>
        <taxon>Pinidae</taxon>
        <taxon>Conifers I</taxon>
        <taxon>Pinales</taxon>
        <taxon>Pinaceae</taxon>
        <taxon>Pinus</taxon>
        <taxon>Pinus subgen. Pinus</taxon>
    </lineage>
</organism>
<evidence type="ECO:0000250" key="1"/>
<evidence type="ECO:0000305" key="2"/>
<name>RBL_PINPS</name>
<geneLocation type="chloroplast"/>
<protein>
    <recommendedName>
        <fullName>Ribulose bisphosphate carboxylase large chain</fullName>
        <shortName>RuBisCO large subunit</shortName>
        <ecNumber>4.1.1.39</ecNumber>
    </recommendedName>
    <alternativeName>
        <fullName>Water stress-responsive protein 1/2/14</fullName>
    </alternativeName>
</protein>